<dbReference type="EMBL" id="CP000923">
    <property type="protein sequence ID" value="ABY92914.1"/>
    <property type="molecule type" value="Genomic_DNA"/>
</dbReference>
<dbReference type="RefSeq" id="WP_009052385.1">
    <property type="nucleotide sequence ID" value="NC_010320.1"/>
</dbReference>
<dbReference type="SMR" id="B0K1B9"/>
<dbReference type="KEGG" id="tex:Teth514_1628"/>
<dbReference type="HOGENOM" id="CLU_030805_9_3_9"/>
<dbReference type="Proteomes" id="UP000002155">
    <property type="component" value="Chromosome"/>
</dbReference>
<dbReference type="CDD" id="cd00885">
    <property type="entry name" value="cinA"/>
    <property type="match status" value="1"/>
</dbReference>
<dbReference type="Gene3D" id="3.30.70.2860">
    <property type="match status" value="1"/>
</dbReference>
<dbReference type="Gene3D" id="3.90.950.20">
    <property type="entry name" value="CinA-like"/>
    <property type="match status" value="1"/>
</dbReference>
<dbReference type="Gene3D" id="3.40.980.10">
    <property type="entry name" value="MoaB/Mog-like domain"/>
    <property type="match status" value="1"/>
</dbReference>
<dbReference type="HAMAP" id="MF_00226_B">
    <property type="entry name" value="CinA_B"/>
    <property type="match status" value="1"/>
</dbReference>
<dbReference type="InterPro" id="IPR050101">
    <property type="entry name" value="CinA"/>
</dbReference>
<dbReference type="InterPro" id="IPR036653">
    <property type="entry name" value="CinA-like_C"/>
</dbReference>
<dbReference type="InterPro" id="IPR008136">
    <property type="entry name" value="CinA_C"/>
</dbReference>
<dbReference type="InterPro" id="IPR041424">
    <property type="entry name" value="CinA_KH"/>
</dbReference>
<dbReference type="InterPro" id="IPR008135">
    <property type="entry name" value="Competence-induced_CinA"/>
</dbReference>
<dbReference type="InterPro" id="IPR036425">
    <property type="entry name" value="MoaB/Mog-like_dom_sf"/>
</dbReference>
<dbReference type="InterPro" id="IPR001453">
    <property type="entry name" value="MoaB/Mog_dom"/>
</dbReference>
<dbReference type="NCBIfam" id="TIGR00200">
    <property type="entry name" value="cinA_nterm"/>
    <property type="match status" value="1"/>
</dbReference>
<dbReference type="NCBIfam" id="TIGR00177">
    <property type="entry name" value="molyb_syn"/>
    <property type="match status" value="1"/>
</dbReference>
<dbReference type="NCBIfam" id="TIGR00199">
    <property type="entry name" value="PncC_domain"/>
    <property type="match status" value="1"/>
</dbReference>
<dbReference type="NCBIfam" id="NF001813">
    <property type="entry name" value="PRK00549.1"/>
    <property type="match status" value="1"/>
</dbReference>
<dbReference type="PANTHER" id="PTHR13939">
    <property type="entry name" value="NICOTINAMIDE-NUCLEOTIDE AMIDOHYDROLASE PNCC"/>
    <property type="match status" value="1"/>
</dbReference>
<dbReference type="PANTHER" id="PTHR13939:SF0">
    <property type="entry name" value="NMN AMIDOHYDROLASE-LIKE PROTEIN YFAY"/>
    <property type="match status" value="1"/>
</dbReference>
<dbReference type="Pfam" id="PF02464">
    <property type="entry name" value="CinA"/>
    <property type="match status" value="1"/>
</dbReference>
<dbReference type="Pfam" id="PF18146">
    <property type="entry name" value="CinA_KH"/>
    <property type="match status" value="1"/>
</dbReference>
<dbReference type="Pfam" id="PF00994">
    <property type="entry name" value="MoCF_biosynth"/>
    <property type="match status" value="1"/>
</dbReference>
<dbReference type="PIRSF" id="PIRSF006728">
    <property type="entry name" value="CinA"/>
    <property type="match status" value="1"/>
</dbReference>
<dbReference type="SMART" id="SM00852">
    <property type="entry name" value="MoCF_biosynth"/>
    <property type="match status" value="1"/>
</dbReference>
<dbReference type="SUPFAM" id="SSF142433">
    <property type="entry name" value="CinA-like"/>
    <property type="match status" value="1"/>
</dbReference>
<dbReference type="SUPFAM" id="SSF53218">
    <property type="entry name" value="Molybdenum cofactor biosynthesis proteins"/>
    <property type="match status" value="1"/>
</dbReference>
<name>CINA_THEPX</name>
<organism>
    <name type="scientific">Thermoanaerobacter sp. (strain X514)</name>
    <dbReference type="NCBI Taxonomy" id="399726"/>
    <lineage>
        <taxon>Bacteria</taxon>
        <taxon>Bacillati</taxon>
        <taxon>Bacillota</taxon>
        <taxon>Clostridia</taxon>
        <taxon>Thermoanaerobacterales</taxon>
        <taxon>Thermoanaerobacteraceae</taxon>
        <taxon>Thermoanaerobacter</taxon>
    </lineage>
</organism>
<comment type="similarity">
    <text evidence="1">Belongs to the CinA family.</text>
</comment>
<sequence>MRGEIISVGTELLLGQILNTNAKYLSEKLALLGIDIYFHTNVGDNEERLKECLNIAFNRSDLIITTGGLGPTVDDITKETVASFLGLPLVENLEAKEEIIRFFEKIGQTPTMNNFKQAFFPEGAKILPNKNGTAPGCIIEKDNKIIIILPGPPSELIPMFEEYVYHYLKSKTNETIKSRVIKIFGLGESKVEEMVRPLLFNSNPTVAPLVGDGYVILRITAKGHDDKEISEMIEDMESRIRGIIGDYIYAVDEEEMEEVVVKLLQKNKLTLAVSESCTGGLLAKKITDVSGASKVFNLGVVSYSNEAKENILGVRKSTLESYGAVSYETAKEMAENVRKLANADFGLSTTGIAGPTGGTPEKPVGLVYVGFATNEEVYVKKLMLSGDRSKIRTRTVLHALDIVRRYLLGIKID</sequence>
<proteinExistence type="inferred from homology"/>
<gene>
    <name evidence="1" type="primary">cinA</name>
    <name type="ordered locus">Teth514_1628</name>
</gene>
<evidence type="ECO:0000255" key="1">
    <source>
        <dbReference type="HAMAP-Rule" id="MF_00226"/>
    </source>
</evidence>
<protein>
    <recommendedName>
        <fullName evidence="1">Putative competence-damage inducible protein</fullName>
    </recommendedName>
</protein>
<accession>B0K1B9</accession>
<reference key="1">
    <citation type="submission" date="2008-01" db="EMBL/GenBank/DDBJ databases">
        <title>Complete sequence of Thermoanaerobacter sp. X514.</title>
        <authorList>
            <consortium name="US DOE Joint Genome Institute"/>
            <person name="Copeland A."/>
            <person name="Lucas S."/>
            <person name="Lapidus A."/>
            <person name="Barry K."/>
            <person name="Glavina del Rio T."/>
            <person name="Dalin E."/>
            <person name="Tice H."/>
            <person name="Pitluck S."/>
            <person name="Bruce D."/>
            <person name="Goodwin L."/>
            <person name="Saunders E."/>
            <person name="Brettin T."/>
            <person name="Detter J.C."/>
            <person name="Han C."/>
            <person name="Schmutz J."/>
            <person name="Larimer F."/>
            <person name="Land M."/>
            <person name="Hauser L."/>
            <person name="Kyrpides N."/>
            <person name="Kim E."/>
            <person name="Hemme C."/>
            <person name="Fields M.W."/>
            <person name="He Z."/>
            <person name="Zhou J."/>
            <person name="Richardson P."/>
        </authorList>
    </citation>
    <scope>NUCLEOTIDE SEQUENCE [LARGE SCALE GENOMIC DNA]</scope>
    <source>
        <strain>X514</strain>
    </source>
</reference>
<feature type="chain" id="PRO_1000100342" description="Putative competence-damage inducible protein">
    <location>
        <begin position="1"/>
        <end position="413"/>
    </location>
</feature>